<name>CCD92_MOUSE</name>
<gene>
    <name type="primary">Ccdc92</name>
    <name type="synonym">D5Bwg0834e</name>
</gene>
<protein>
    <recommendedName>
        <fullName>Coiled-coil domain-containing protein 92</fullName>
    </recommendedName>
</protein>
<comment type="function">
    <text evidence="2">Interferon-stimulated protein that plays a role in innate immunity.</text>
</comment>
<comment type="subunit">
    <text evidence="1">Interacts with CEP164.</text>
</comment>
<comment type="subcellular location">
    <subcellularLocation>
        <location evidence="2">Cytoplasm</location>
        <location evidence="2">Cytoskeleton</location>
        <location evidence="2">Microtubule organizing center</location>
        <location evidence="2">Centrosome</location>
        <location evidence="2">Centriole</location>
    </subcellularLocation>
    <subcellularLocation>
        <location evidence="2">Cytoplasm</location>
    </subcellularLocation>
</comment>
<comment type="PTM">
    <text evidence="2">Phosphorylated at Ser-192 by TTBK2.</text>
</comment>
<evidence type="ECO:0000250" key="1"/>
<evidence type="ECO:0000250" key="2">
    <source>
        <dbReference type="UniProtKB" id="Q53HC0"/>
    </source>
</evidence>
<evidence type="ECO:0000255" key="3"/>
<evidence type="ECO:0000256" key="4">
    <source>
        <dbReference type="SAM" id="MobiDB-lite"/>
    </source>
</evidence>
<feature type="chain" id="PRO_0000274501" description="Coiled-coil domain-containing protein 92">
    <location>
        <begin position="1"/>
        <end position="314"/>
    </location>
</feature>
<feature type="region of interest" description="Disordered" evidence="4">
    <location>
        <begin position="153"/>
        <end position="193"/>
    </location>
</feature>
<feature type="region of interest" description="Disordered" evidence="4">
    <location>
        <begin position="251"/>
        <end position="314"/>
    </location>
</feature>
<feature type="coiled-coil region" evidence="3">
    <location>
        <begin position="1"/>
        <end position="27"/>
    </location>
</feature>
<feature type="coiled-coil region" evidence="3">
    <location>
        <begin position="59"/>
        <end position="113"/>
    </location>
</feature>
<feature type="compositionally biased region" description="Basic and acidic residues" evidence="4">
    <location>
        <begin position="176"/>
        <end position="186"/>
    </location>
</feature>
<feature type="compositionally biased region" description="Basic residues" evidence="4">
    <location>
        <begin position="266"/>
        <end position="280"/>
    </location>
</feature>
<feature type="modified residue" description="Phosphoserine" evidence="2">
    <location>
        <position position="192"/>
    </location>
</feature>
<organism>
    <name type="scientific">Mus musculus</name>
    <name type="common">Mouse</name>
    <dbReference type="NCBI Taxonomy" id="10090"/>
    <lineage>
        <taxon>Eukaryota</taxon>
        <taxon>Metazoa</taxon>
        <taxon>Chordata</taxon>
        <taxon>Craniata</taxon>
        <taxon>Vertebrata</taxon>
        <taxon>Euteleostomi</taxon>
        <taxon>Mammalia</taxon>
        <taxon>Eutheria</taxon>
        <taxon>Euarchontoglires</taxon>
        <taxon>Glires</taxon>
        <taxon>Rodentia</taxon>
        <taxon>Myomorpha</taxon>
        <taxon>Muroidea</taxon>
        <taxon>Muridae</taxon>
        <taxon>Murinae</taxon>
        <taxon>Mus</taxon>
        <taxon>Mus</taxon>
    </lineage>
</organism>
<sequence>MAATNLENQLHSAQKNLLFLQREHASTLKGLHAEIRRLQQHCTDLTYELTLKSFELTGDSSSRTTELKRRCEELEAQLKAKEEENRKLLQELEQKNAAIAVLENTVREREKKYLEELKVKSHKLSMLSGELEQRASTVAYLTSQLHAAKKKLLSSSGTSDASPAGSPALASYKPTPPKDKLPETPRRRMKKSLSAPLHPEFEEVYRFGAESRKLLLREPVDAMPDPTPFLLARESAEVQLKERPLVIPPIASDRSATGQHSPARDKPHKTHVGVAHRIHHATPSQAQPEGEMRAVDQVNASKVVRKHSGTDRTV</sequence>
<proteinExistence type="evidence at protein level"/>
<accession>Q8VDN4</accession>
<keyword id="KW-0175">Coiled coil</keyword>
<keyword id="KW-0963">Cytoplasm</keyword>
<keyword id="KW-0206">Cytoskeleton</keyword>
<keyword id="KW-0391">Immunity</keyword>
<keyword id="KW-0399">Innate immunity</keyword>
<keyword id="KW-0597">Phosphoprotein</keyword>
<keyword id="KW-1185">Reference proteome</keyword>
<dbReference type="EMBL" id="AK165371">
    <property type="protein sequence ID" value="BAE38150.1"/>
    <property type="molecule type" value="mRNA"/>
</dbReference>
<dbReference type="EMBL" id="BC021492">
    <property type="protein sequence ID" value="AAH21492.1"/>
    <property type="molecule type" value="mRNA"/>
</dbReference>
<dbReference type="CCDS" id="CCDS19681.1"/>
<dbReference type="RefSeq" id="NP_001404975.1">
    <property type="nucleotide sequence ID" value="NM_001418046.1"/>
</dbReference>
<dbReference type="RefSeq" id="NP_659068.1">
    <property type="nucleotide sequence ID" value="NM_144819.3"/>
</dbReference>
<dbReference type="RefSeq" id="XP_006504350.1">
    <property type="nucleotide sequence ID" value="XM_006504287.3"/>
</dbReference>
<dbReference type="SMR" id="Q8VDN4"/>
<dbReference type="BioGRID" id="229650">
    <property type="interactions" value="3"/>
</dbReference>
<dbReference type="FunCoup" id="Q8VDN4">
    <property type="interactions" value="1039"/>
</dbReference>
<dbReference type="STRING" id="10090.ENSMUSP00000038075"/>
<dbReference type="GlyGen" id="Q8VDN4">
    <property type="glycosylation" value="1 site"/>
</dbReference>
<dbReference type="iPTMnet" id="Q8VDN4"/>
<dbReference type="PhosphoSitePlus" id="Q8VDN4"/>
<dbReference type="jPOST" id="Q8VDN4"/>
<dbReference type="PaxDb" id="10090-ENSMUSP00000038075"/>
<dbReference type="PeptideAtlas" id="Q8VDN4"/>
<dbReference type="ProteomicsDB" id="281419"/>
<dbReference type="Pumba" id="Q8VDN4"/>
<dbReference type="Antibodypedia" id="52615">
    <property type="antibodies" value="117 antibodies from 20 providers"/>
</dbReference>
<dbReference type="DNASU" id="215707"/>
<dbReference type="Ensembl" id="ENSMUST00000036206.14">
    <property type="protein sequence ID" value="ENSMUSP00000038075.8"/>
    <property type="gene ID" value="ENSMUSG00000037979.14"/>
</dbReference>
<dbReference type="GeneID" id="215707"/>
<dbReference type="KEGG" id="mmu:215707"/>
<dbReference type="UCSC" id="uc008zqr.1">
    <property type="organism name" value="mouse"/>
</dbReference>
<dbReference type="AGR" id="MGI:106485"/>
<dbReference type="CTD" id="80212"/>
<dbReference type="MGI" id="MGI:106485">
    <property type="gene designation" value="Ccdc92"/>
</dbReference>
<dbReference type="VEuPathDB" id="HostDB:ENSMUSG00000037979"/>
<dbReference type="eggNOG" id="ENOG502QQWS">
    <property type="taxonomic scope" value="Eukaryota"/>
</dbReference>
<dbReference type="GeneTree" id="ENSGT00430000031027"/>
<dbReference type="HOGENOM" id="CLU_076253_0_0_1"/>
<dbReference type="InParanoid" id="Q8VDN4"/>
<dbReference type="OMA" id="AHRIHHG"/>
<dbReference type="OrthoDB" id="2155209at2759"/>
<dbReference type="PhylomeDB" id="Q8VDN4"/>
<dbReference type="TreeFam" id="TF329066"/>
<dbReference type="BioGRID-ORCS" id="215707">
    <property type="hits" value="1 hit in 77 CRISPR screens"/>
</dbReference>
<dbReference type="CD-CODE" id="CE726F99">
    <property type="entry name" value="Postsynaptic density"/>
</dbReference>
<dbReference type="ChiTaRS" id="Ccdc92">
    <property type="organism name" value="mouse"/>
</dbReference>
<dbReference type="PRO" id="PR:Q8VDN4"/>
<dbReference type="Proteomes" id="UP000000589">
    <property type="component" value="Chromosome 5"/>
</dbReference>
<dbReference type="RNAct" id="Q8VDN4">
    <property type="molecule type" value="protein"/>
</dbReference>
<dbReference type="Bgee" id="ENSMUSG00000037979">
    <property type="expression patterns" value="Expressed in animal zygote and 159 other cell types or tissues"/>
</dbReference>
<dbReference type="ExpressionAtlas" id="Q8VDN4">
    <property type="expression patterns" value="baseline and differential"/>
</dbReference>
<dbReference type="GO" id="GO:0005814">
    <property type="term" value="C:centriole"/>
    <property type="evidence" value="ECO:0007669"/>
    <property type="project" value="UniProtKB-SubCell"/>
</dbReference>
<dbReference type="GO" id="GO:0005813">
    <property type="term" value="C:centrosome"/>
    <property type="evidence" value="ECO:0007669"/>
    <property type="project" value="Ensembl"/>
</dbReference>
<dbReference type="GO" id="GO:0005737">
    <property type="term" value="C:cytoplasm"/>
    <property type="evidence" value="ECO:0007669"/>
    <property type="project" value="UniProtKB-SubCell"/>
</dbReference>
<dbReference type="GO" id="GO:0005654">
    <property type="term" value="C:nucleoplasm"/>
    <property type="evidence" value="ECO:0007669"/>
    <property type="project" value="Ensembl"/>
</dbReference>
<dbReference type="GO" id="GO:0042802">
    <property type="term" value="F:identical protein binding"/>
    <property type="evidence" value="ECO:0007669"/>
    <property type="project" value="Ensembl"/>
</dbReference>
<dbReference type="GO" id="GO:0045087">
    <property type="term" value="P:innate immune response"/>
    <property type="evidence" value="ECO:0007669"/>
    <property type="project" value="UniProtKB-KW"/>
</dbReference>
<dbReference type="InterPro" id="IPR040370">
    <property type="entry name" value="CCDC74A/CCDC74B/CCDC92"/>
</dbReference>
<dbReference type="InterPro" id="IPR039496">
    <property type="entry name" value="CCDC92/74_N"/>
</dbReference>
<dbReference type="PANTHER" id="PTHR14882">
    <property type="entry name" value="COILED-COIL DOMAIN-CONTAINING 74A"/>
    <property type="match status" value="1"/>
</dbReference>
<dbReference type="PANTHER" id="PTHR14882:SF4">
    <property type="entry name" value="COILED-COIL DOMAIN-CONTAINING PROTEIN 92"/>
    <property type="match status" value="1"/>
</dbReference>
<dbReference type="Pfam" id="PF14916">
    <property type="entry name" value="CCDC92"/>
    <property type="match status" value="1"/>
</dbReference>
<reference key="1">
    <citation type="journal article" date="2005" name="Science">
        <title>The transcriptional landscape of the mammalian genome.</title>
        <authorList>
            <person name="Carninci P."/>
            <person name="Kasukawa T."/>
            <person name="Katayama S."/>
            <person name="Gough J."/>
            <person name="Frith M.C."/>
            <person name="Maeda N."/>
            <person name="Oyama R."/>
            <person name="Ravasi T."/>
            <person name="Lenhard B."/>
            <person name="Wells C."/>
            <person name="Kodzius R."/>
            <person name="Shimokawa K."/>
            <person name="Bajic V.B."/>
            <person name="Brenner S.E."/>
            <person name="Batalov S."/>
            <person name="Forrest A.R."/>
            <person name="Zavolan M."/>
            <person name="Davis M.J."/>
            <person name="Wilming L.G."/>
            <person name="Aidinis V."/>
            <person name="Allen J.E."/>
            <person name="Ambesi-Impiombato A."/>
            <person name="Apweiler R."/>
            <person name="Aturaliya R.N."/>
            <person name="Bailey T.L."/>
            <person name="Bansal M."/>
            <person name="Baxter L."/>
            <person name="Beisel K.W."/>
            <person name="Bersano T."/>
            <person name="Bono H."/>
            <person name="Chalk A.M."/>
            <person name="Chiu K.P."/>
            <person name="Choudhary V."/>
            <person name="Christoffels A."/>
            <person name="Clutterbuck D.R."/>
            <person name="Crowe M.L."/>
            <person name="Dalla E."/>
            <person name="Dalrymple B.P."/>
            <person name="de Bono B."/>
            <person name="Della Gatta G."/>
            <person name="di Bernardo D."/>
            <person name="Down T."/>
            <person name="Engstrom P."/>
            <person name="Fagiolini M."/>
            <person name="Faulkner G."/>
            <person name="Fletcher C.F."/>
            <person name="Fukushima T."/>
            <person name="Furuno M."/>
            <person name="Futaki S."/>
            <person name="Gariboldi M."/>
            <person name="Georgii-Hemming P."/>
            <person name="Gingeras T.R."/>
            <person name="Gojobori T."/>
            <person name="Green R.E."/>
            <person name="Gustincich S."/>
            <person name="Harbers M."/>
            <person name="Hayashi Y."/>
            <person name="Hensch T.K."/>
            <person name="Hirokawa N."/>
            <person name="Hill D."/>
            <person name="Huminiecki L."/>
            <person name="Iacono M."/>
            <person name="Ikeo K."/>
            <person name="Iwama A."/>
            <person name="Ishikawa T."/>
            <person name="Jakt M."/>
            <person name="Kanapin A."/>
            <person name="Katoh M."/>
            <person name="Kawasawa Y."/>
            <person name="Kelso J."/>
            <person name="Kitamura H."/>
            <person name="Kitano H."/>
            <person name="Kollias G."/>
            <person name="Krishnan S.P."/>
            <person name="Kruger A."/>
            <person name="Kummerfeld S.K."/>
            <person name="Kurochkin I.V."/>
            <person name="Lareau L.F."/>
            <person name="Lazarevic D."/>
            <person name="Lipovich L."/>
            <person name="Liu J."/>
            <person name="Liuni S."/>
            <person name="McWilliam S."/>
            <person name="Madan Babu M."/>
            <person name="Madera M."/>
            <person name="Marchionni L."/>
            <person name="Matsuda H."/>
            <person name="Matsuzawa S."/>
            <person name="Miki H."/>
            <person name="Mignone F."/>
            <person name="Miyake S."/>
            <person name="Morris K."/>
            <person name="Mottagui-Tabar S."/>
            <person name="Mulder N."/>
            <person name="Nakano N."/>
            <person name="Nakauchi H."/>
            <person name="Ng P."/>
            <person name="Nilsson R."/>
            <person name="Nishiguchi S."/>
            <person name="Nishikawa S."/>
            <person name="Nori F."/>
            <person name="Ohara O."/>
            <person name="Okazaki Y."/>
            <person name="Orlando V."/>
            <person name="Pang K.C."/>
            <person name="Pavan W.J."/>
            <person name="Pavesi G."/>
            <person name="Pesole G."/>
            <person name="Petrovsky N."/>
            <person name="Piazza S."/>
            <person name="Reed J."/>
            <person name="Reid J.F."/>
            <person name="Ring B.Z."/>
            <person name="Ringwald M."/>
            <person name="Rost B."/>
            <person name="Ruan Y."/>
            <person name="Salzberg S.L."/>
            <person name="Sandelin A."/>
            <person name="Schneider C."/>
            <person name="Schoenbach C."/>
            <person name="Sekiguchi K."/>
            <person name="Semple C.A."/>
            <person name="Seno S."/>
            <person name="Sessa L."/>
            <person name="Sheng Y."/>
            <person name="Shibata Y."/>
            <person name="Shimada H."/>
            <person name="Shimada K."/>
            <person name="Silva D."/>
            <person name="Sinclair B."/>
            <person name="Sperling S."/>
            <person name="Stupka E."/>
            <person name="Sugiura K."/>
            <person name="Sultana R."/>
            <person name="Takenaka Y."/>
            <person name="Taki K."/>
            <person name="Tammoja K."/>
            <person name="Tan S.L."/>
            <person name="Tang S."/>
            <person name="Taylor M.S."/>
            <person name="Tegner J."/>
            <person name="Teichmann S.A."/>
            <person name="Ueda H.R."/>
            <person name="van Nimwegen E."/>
            <person name="Verardo R."/>
            <person name="Wei C.L."/>
            <person name="Yagi K."/>
            <person name="Yamanishi H."/>
            <person name="Zabarovsky E."/>
            <person name="Zhu S."/>
            <person name="Zimmer A."/>
            <person name="Hide W."/>
            <person name="Bult C."/>
            <person name="Grimmond S.M."/>
            <person name="Teasdale R.D."/>
            <person name="Liu E.T."/>
            <person name="Brusic V."/>
            <person name="Quackenbush J."/>
            <person name="Wahlestedt C."/>
            <person name="Mattick J.S."/>
            <person name="Hume D.A."/>
            <person name="Kai C."/>
            <person name="Sasaki D."/>
            <person name="Tomaru Y."/>
            <person name="Fukuda S."/>
            <person name="Kanamori-Katayama M."/>
            <person name="Suzuki M."/>
            <person name="Aoki J."/>
            <person name="Arakawa T."/>
            <person name="Iida J."/>
            <person name="Imamura K."/>
            <person name="Itoh M."/>
            <person name="Kato T."/>
            <person name="Kawaji H."/>
            <person name="Kawagashira N."/>
            <person name="Kawashima T."/>
            <person name="Kojima M."/>
            <person name="Kondo S."/>
            <person name="Konno H."/>
            <person name="Nakano K."/>
            <person name="Ninomiya N."/>
            <person name="Nishio T."/>
            <person name="Okada M."/>
            <person name="Plessy C."/>
            <person name="Shibata K."/>
            <person name="Shiraki T."/>
            <person name="Suzuki S."/>
            <person name="Tagami M."/>
            <person name="Waki K."/>
            <person name="Watahiki A."/>
            <person name="Okamura-Oho Y."/>
            <person name="Suzuki H."/>
            <person name="Kawai J."/>
            <person name="Hayashizaki Y."/>
        </authorList>
    </citation>
    <scope>NUCLEOTIDE SEQUENCE [LARGE SCALE MRNA]</scope>
    <source>
        <strain>C57BL/6J</strain>
        <tissue>Spleen</tissue>
    </source>
</reference>
<reference key="2">
    <citation type="journal article" date="2004" name="Genome Res.">
        <title>The status, quality, and expansion of the NIH full-length cDNA project: the Mammalian Gene Collection (MGC).</title>
        <authorList>
            <consortium name="The MGC Project Team"/>
        </authorList>
    </citation>
    <scope>NUCLEOTIDE SEQUENCE [LARGE SCALE MRNA]</scope>
    <source>
        <strain>FVB/N</strain>
        <tissue>Mammary tumor</tissue>
    </source>
</reference>
<reference key="3">
    <citation type="journal article" date="2010" name="Cell">
        <title>A tissue-specific atlas of mouse protein phosphorylation and expression.</title>
        <authorList>
            <person name="Huttlin E.L."/>
            <person name="Jedrychowski M.P."/>
            <person name="Elias J.E."/>
            <person name="Goswami T."/>
            <person name="Rad R."/>
            <person name="Beausoleil S.A."/>
            <person name="Villen J."/>
            <person name="Haas W."/>
            <person name="Sowa M.E."/>
            <person name="Gygi S.P."/>
        </authorList>
    </citation>
    <scope>IDENTIFICATION BY MASS SPECTROMETRY [LARGE SCALE ANALYSIS]</scope>
    <source>
        <tissue>Brain</tissue>
    </source>
</reference>